<keyword id="KW-0687">Ribonucleoprotein</keyword>
<keyword id="KW-0689">Ribosomal protein</keyword>
<name>RL7_CLOBL</name>
<organism>
    <name type="scientific">Clostridium botulinum (strain Langeland / NCTC 10281 / Type F)</name>
    <dbReference type="NCBI Taxonomy" id="441772"/>
    <lineage>
        <taxon>Bacteria</taxon>
        <taxon>Bacillati</taxon>
        <taxon>Bacillota</taxon>
        <taxon>Clostridia</taxon>
        <taxon>Eubacteriales</taxon>
        <taxon>Clostridiaceae</taxon>
        <taxon>Clostridium</taxon>
    </lineage>
</organism>
<sequence>MKKEEIIQAIKEMTVLELNELVEACEEEFGVSAAAPVAVAGAGAAAAGAAEEKTEFDVVLTDAGSEKIKVIKAVREVTGLGLKEAKALVDGAPKTLKEAASKEDGEAIKAKLEEVGAKVELK</sequence>
<reference key="1">
    <citation type="submission" date="2007-06" db="EMBL/GenBank/DDBJ databases">
        <authorList>
            <person name="Brinkac L.M."/>
            <person name="Daugherty S."/>
            <person name="Dodson R.J."/>
            <person name="Madupu R."/>
            <person name="Brown J.L."/>
            <person name="Bruce D."/>
            <person name="Detter C."/>
            <person name="Munk C."/>
            <person name="Smith L.A."/>
            <person name="Smith T.J."/>
            <person name="White O."/>
            <person name="Brettin T.S."/>
        </authorList>
    </citation>
    <scope>NUCLEOTIDE SEQUENCE [LARGE SCALE GENOMIC DNA]</scope>
    <source>
        <strain>Langeland / NCTC 10281 / Type F</strain>
    </source>
</reference>
<gene>
    <name evidence="1" type="primary">rplL</name>
    <name type="ordered locus">CLI_3672</name>
</gene>
<feature type="chain" id="PRO_1000006990" description="Large ribosomal subunit protein bL12">
    <location>
        <begin position="1"/>
        <end position="122"/>
    </location>
</feature>
<proteinExistence type="inferred from homology"/>
<protein>
    <recommendedName>
        <fullName evidence="1">Large ribosomal subunit protein bL12</fullName>
    </recommendedName>
    <alternativeName>
        <fullName evidence="2">50S ribosomal protein L7/L12</fullName>
    </alternativeName>
</protein>
<comment type="function">
    <text evidence="1">Forms part of the ribosomal stalk which helps the ribosome interact with GTP-bound translation factors. Is thus essential for accurate translation.</text>
</comment>
<comment type="subunit">
    <text evidence="1">Homodimer. Part of the ribosomal stalk of the 50S ribosomal subunit. Forms a multimeric L10(L12)X complex, where L10 forms an elongated spine to which 2 to 4 L12 dimers bind in a sequential fashion. Binds GTP-bound translation factors.</text>
</comment>
<comment type="similarity">
    <text evidence="1">Belongs to the bacterial ribosomal protein bL12 family.</text>
</comment>
<dbReference type="EMBL" id="CP000728">
    <property type="protein sequence ID" value="ABS42550.1"/>
    <property type="molecule type" value="Genomic_DNA"/>
</dbReference>
<dbReference type="RefSeq" id="WP_012101136.1">
    <property type="nucleotide sequence ID" value="NC_009699.1"/>
</dbReference>
<dbReference type="SMR" id="A7GJ83"/>
<dbReference type="KEGG" id="cbf:CLI_3672"/>
<dbReference type="HOGENOM" id="CLU_086499_3_2_9"/>
<dbReference type="Proteomes" id="UP000002410">
    <property type="component" value="Chromosome"/>
</dbReference>
<dbReference type="GO" id="GO:0022625">
    <property type="term" value="C:cytosolic large ribosomal subunit"/>
    <property type="evidence" value="ECO:0007669"/>
    <property type="project" value="TreeGrafter"/>
</dbReference>
<dbReference type="GO" id="GO:0003729">
    <property type="term" value="F:mRNA binding"/>
    <property type="evidence" value="ECO:0007669"/>
    <property type="project" value="TreeGrafter"/>
</dbReference>
<dbReference type="GO" id="GO:0003735">
    <property type="term" value="F:structural constituent of ribosome"/>
    <property type="evidence" value="ECO:0007669"/>
    <property type="project" value="InterPro"/>
</dbReference>
<dbReference type="GO" id="GO:0006412">
    <property type="term" value="P:translation"/>
    <property type="evidence" value="ECO:0007669"/>
    <property type="project" value="UniProtKB-UniRule"/>
</dbReference>
<dbReference type="CDD" id="cd00387">
    <property type="entry name" value="Ribosomal_L7_L12"/>
    <property type="match status" value="1"/>
</dbReference>
<dbReference type="FunFam" id="1.20.5.710:FF:000002">
    <property type="entry name" value="50S ribosomal protein L7/L12"/>
    <property type="match status" value="1"/>
</dbReference>
<dbReference type="FunFam" id="3.30.1390.10:FF:000001">
    <property type="entry name" value="50S ribosomal protein L7/L12"/>
    <property type="match status" value="1"/>
</dbReference>
<dbReference type="Gene3D" id="3.30.1390.10">
    <property type="match status" value="1"/>
</dbReference>
<dbReference type="Gene3D" id="1.20.5.710">
    <property type="entry name" value="Single helix bin"/>
    <property type="match status" value="1"/>
</dbReference>
<dbReference type="HAMAP" id="MF_00368">
    <property type="entry name" value="Ribosomal_bL12"/>
    <property type="match status" value="1"/>
</dbReference>
<dbReference type="InterPro" id="IPR000206">
    <property type="entry name" value="Ribosomal_bL12"/>
</dbReference>
<dbReference type="InterPro" id="IPR013823">
    <property type="entry name" value="Ribosomal_bL12_C"/>
</dbReference>
<dbReference type="InterPro" id="IPR014719">
    <property type="entry name" value="Ribosomal_bL12_C/ClpS-like"/>
</dbReference>
<dbReference type="InterPro" id="IPR008932">
    <property type="entry name" value="Ribosomal_bL12_oligo"/>
</dbReference>
<dbReference type="InterPro" id="IPR036235">
    <property type="entry name" value="Ribosomal_bL12_oligo_N_sf"/>
</dbReference>
<dbReference type="NCBIfam" id="TIGR00855">
    <property type="entry name" value="L12"/>
    <property type="match status" value="1"/>
</dbReference>
<dbReference type="PANTHER" id="PTHR45987">
    <property type="entry name" value="39S RIBOSOMAL PROTEIN L12"/>
    <property type="match status" value="1"/>
</dbReference>
<dbReference type="PANTHER" id="PTHR45987:SF4">
    <property type="entry name" value="LARGE RIBOSOMAL SUBUNIT PROTEIN BL12M"/>
    <property type="match status" value="1"/>
</dbReference>
<dbReference type="Pfam" id="PF00542">
    <property type="entry name" value="Ribosomal_L12"/>
    <property type="match status" value="1"/>
</dbReference>
<dbReference type="Pfam" id="PF16320">
    <property type="entry name" value="Ribosomal_L12_N"/>
    <property type="match status" value="1"/>
</dbReference>
<dbReference type="SUPFAM" id="SSF54736">
    <property type="entry name" value="ClpS-like"/>
    <property type="match status" value="1"/>
</dbReference>
<dbReference type="SUPFAM" id="SSF48300">
    <property type="entry name" value="Ribosomal protein L7/12, oligomerisation (N-terminal) domain"/>
    <property type="match status" value="1"/>
</dbReference>
<evidence type="ECO:0000255" key="1">
    <source>
        <dbReference type="HAMAP-Rule" id="MF_00368"/>
    </source>
</evidence>
<evidence type="ECO:0000305" key="2"/>
<accession>A7GJ83</accession>